<protein>
    <recommendedName>
        <fullName>XIAP-associated factor 1</fullName>
    </recommendedName>
    <alternativeName>
        <fullName>BIRC4-binding protein</fullName>
    </alternativeName>
</protein>
<dbReference type="EMBL" id="X99699">
    <property type="protein sequence ID" value="CAA68030.1"/>
    <property type="status" value="ALT_FRAME"/>
    <property type="molecule type" value="mRNA"/>
</dbReference>
<dbReference type="EMBL" id="EF028165">
    <property type="protein sequence ID" value="ABM74556.1"/>
    <property type="molecule type" value="mRNA"/>
</dbReference>
<dbReference type="EMBL" id="EF028166">
    <property type="protein sequence ID" value="ABM74557.1"/>
    <property type="molecule type" value="mRNA"/>
</dbReference>
<dbReference type="EMBL" id="AK290276">
    <property type="protein sequence ID" value="BAF82965.1"/>
    <property type="molecule type" value="mRNA"/>
</dbReference>
<dbReference type="EMBL" id="AK292710">
    <property type="protein sequence ID" value="BAF85399.1"/>
    <property type="molecule type" value="mRNA"/>
</dbReference>
<dbReference type="EMBL" id="AK292848">
    <property type="protein sequence ID" value="BAF85537.1"/>
    <property type="molecule type" value="mRNA"/>
</dbReference>
<dbReference type="EMBL" id="CH471108">
    <property type="protein sequence ID" value="EAW90288.1"/>
    <property type="molecule type" value="Genomic_DNA"/>
</dbReference>
<dbReference type="EMBL" id="CH471108">
    <property type="protein sequence ID" value="EAW90289.1"/>
    <property type="molecule type" value="Genomic_DNA"/>
</dbReference>
<dbReference type="EMBL" id="BC032776">
    <property type="protein sequence ID" value="AAH32776.1"/>
    <property type="status" value="ALT_INIT"/>
    <property type="molecule type" value="mRNA"/>
</dbReference>
<dbReference type="EMBL" id="BC073156">
    <property type="protein sequence ID" value="AAH73156.1"/>
    <property type="molecule type" value="mRNA"/>
</dbReference>
<dbReference type="EMBL" id="BX649188">
    <property type="protein sequence ID" value="CAE46206.1"/>
    <property type="molecule type" value="mRNA"/>
</dbReference>
<dbReference type="CCDS" id="CCDS11080.1">
    <molecule id="Q6GPH4-1"/>
</dbReference>
<dbReference type="CCDS" id="CCDS11081.1">
    <molecule id="Q6GPH4-2"/>
</dbReference>
<dbReference type="RefSeq" id="NP_001340064.1">
    <molecule id="Q6GPH4-1"/>
    <property type="nucleotide sequence ID" value="NM_001353135.1"/>
</dbReference>
<dbReference type="RefSeq" id="NP_059993.2">
    <molecule id="Q6GPH4-1"/>
    <property type="nucleotide sequence ID" value="NM_017523.3"/>
</dbReference>
<dbReference type="RefSeq" id="NP_954590.1">
    <molecule id="Q6GPH4-2"/>
    <property type="nucleotide sequence ID" value="NM_199139.4"/>
</dbReference>
<dbReference type="RefSeq" id="XP_005256765.1">
    <property type="nucleotide sequence ID" value="XM_005256708.2"/>
</dbReference>
<dbReference type="RefSeq" id="XP_047292274.1">
    <molecule id="Q6GPH4-6"/>
    <property type="nucleotide sequence ID" value="XM_047436318.1"/>
</dbReference>
<dbReference type="RefSeq" id="XP_054172520.1">
    <molecule id="Q6GPH4-6"/>
    <property type="nucleotide sequence ID" value="XM_054316545.1"/>
</dbReference>
<dbReference type="PDB" id="2LXW">
    <property type="method" value="NMR"/>
    <property type="chains" value="A=251-301"/>
</dbReference>
<dbReference type="PDBsum" id="2LXW"/>
<dbReference type="BMRB" id="Q6GPH4"/>
<dbReference type="SMR" id="Q6GPH4"/>
<dbReference type="BioGRID" id="120121">
    <property type="interactions" value="44"/>
</dbReference>
<dbReference type="CORUM" id="Q6GPH4"/>
<dbReference type="FunCoup" id="Q6GPH4">
    <property type="interactions" value="770"/>
</dbReference>
<dbReference type="IntAct" id="Q6GPH4">
    <property type="interactions" value="26"/>
</dbReference>
<dbReference type="STRING" id="9606.ENSP00000354822"/>
<dbReference type="GlyGen" id="Q6GPH4">
    <property type="glycosylation" value="1 site, 1 O-linked glycan (1 site)"/>
</dbReference>
<dbReference type="iPTMnet" id="Q6GPH4"/>
<dbReference type="PhosphoSitePlus" id="Q6GPH4"/>
<dbReference type="BioMuta" id="XAF1"/>
<dbReference type="DMDM" id="74736479"/>
<dbReference type="jPOST" id="Q6GPH4"/>
<dbReference type="MassIVE" id="Q6GPH4"/>
<dbReference type="PaxDb" id="9606-ENSP00000354822"/>
<dbReference type="PeptideAtlas" id="Q6GPH4"/>
<dbReference type="ProteomicsDB" id="66307">
    <molecule id="Q6GPH4-1"/>
</dbReference>
<dbReference type="ProteomicsDB" id="66308">
    <molecule id="Q6GPH4-2"/>
</dbReference>
<dbReference type="ProteomicsDB" id="66309">
    <molecule id="Q6GPH4-3"/>
</dbReference>
<dbReference type="ProteomicsDB" id="66310">
    <molecule id="Q6GPH4-4"/>
</dbReference>
<dbReference type="ProteomicsDB" id="66311">
    <molecule id="Q6GPH4-5"/>
</dbReference>
<dbReference type="ProteomicsDB" id="66312">
    <molecule id="Q6GPH4-6"/>
</dbReference>
<dbReference type="ProteomicsDB" id="66313">
    <molecule id="Q6GPH4-7"/>
</dbReference>
<dbReference type="Antibodypedia" id="23838">
    <property type="antibodies" value="246 antibodies from 31 providers"/>
</dbReference>
<dbReference type="DNASU" id="54739"/>
<dbReference type="Ensembl" id="ENST00000346752.8">
    <molecule id="Q6GPH4-2"/>
    <property type="protein sequence ID" value="ENSP00000341029.4"/>
    <property type="gene ID" value="ENSG00000132530.17"/>
</dbReference>
<dbReference type="Ensembl" id="ENST00000361842.8">
    <molecule id="Q6GPH4-1"/>
    <property type="protein sequence ID" value="ENSP00000354822.3"/>
    <property type="gene ID" value="ENSG00000132530.17"/>
</dbReference>
<dbReference type="Ensembl" id="ENST00000571673.1">
    <molecule id="Q6GPH4-4"/>
    <property type="protein sequence ID" value="ENSP00000461196.1"/>
    <property type="gene ID" value="ENSG00000132530.17"/>
</dbReference>
<dbReference type="Ensembl" id="ENST00000574962.5">
    <molecule id="Q6GPH4-3"/>
    <property type="protein sequence ID" value="ENSP00000458229.1"/>
    <property type="gene ID" value="ENSG00000132530.17"/>
</dbReference>
<dbReference type="GeneID" id="54739"/>
<dbReference type="KEGG" id="hsa:54739"/>
<dbReference type="MANE-Select" id="ENST00000361842.8">
    <property type="protein sequence ID" value="ENSP00000354822.3"/>
    <property type="RefSeq nucleotide sequence ID" value="NM_017523.5"/>
    <property type="RefSeq protein sequence ID" value="NP_059993.2"/>
</dbReference>
<dbReference type="UCSC" id="uc002gdn.4">
    <molecule id="Q6GPH4-1"/>
    <property type="organism name" value="human"/>
</dbReference>
<dbReference type="AGR" id="HGNC:30932"/>
<dbReference type="CTD" id="54739"/>
<dbReference type="DisGeNET" id="54739"/>
<dbReference type="GeneCards" id="XAF1"/>
<dbReference type="HGNC" id="HGNC:30932">
    <property type="gene designation" value="XAF1"/>
</dbReference>
<dbReference type="HPA" id="ENSG00000132530">
    <property type="expression patterns" value="Low tissue specificity"/>
</dbReference>
<dbReference type="MIM" id="606717">
    <property type="type" value="gene"/>
</dbReference>
<dbReference type="neXtProt" id="NX_Q6GPH4"/>
<dbReference type="OpenTargets" id="ENSG00000132530"/>
<dbReference type="PharmGKB" id="PA162409299"/>
<dbReference type="VEuPathDB" id="HostDB:ENSG00000132530"/>
<dbReference type="eggNOG" id="ENOG502QQRU">
    <property type="taxonomic scope" value="Eukaryota"/>
</dbReference>
<dbReference type="GeneTree" id="ENSGT00530000063869"/>
<dbReference type="HOGENOM" id="CLU_066148_0_0_1"/>
<dbReference type="InParanoid" id="Q6GPH4"/>
<dbReference type="OMA" id="MDHEADE"/>
<dbReference type="OrthoDB" id="422728at2759"/>
<dbReference type="PAN-GO" id="Q6GPH4">
    <property type="GO annotations" value="0 GO annotations based on evolutionary models"/>
</dbReference>
<dbReference type="PhylomeDB" id="Q6GPH4"/>
<dbReference type="TreeFam" id="TF331416"/>
<dbReference type="PathwayCommons" id="Q6GPH4"/>
<dbReference type="Reactome" id="R-HSA-909733">
    <property type="pathway name" value="Interferon alpha/beta signaling"/>
</dbReference>
<dbReference type="SignaLink" id="Q6GPH4"/>
<dbReference type="SIGNOR" id="Q6GPH4"/>
<dbReference type="BioGRID-ORCS" id="54739">
    <property type="hits" value="7 hits in 1151 CRISPR screens"/>
</dbReference>
<dbReference type="ChiTaRS" id="XAF1">
    <property type="organism name" value="human"/>
</dbReference>
<dbReference type="EvolutionaryTrace" id="Q6GPH4"/>
<dbReference type="GeneWiki" id="XAF1"/>
<dbReference type="GenomeRNAi" id="54739"/>
<dbReference type="Pharos" id="Q6GPH4">
    <property type="development level" value="Tbio"/>
</dbReference>
<dbReference type="PRO" id="PR:Q6GPH4"/>
<dbReference type="Proteomes" id="UP000005640">
    <property type="component" value="Chromosome 17"/>
</dbReference>
<dbReference type="RNAct" id="Q6GPH4">
    <property type="molecule type" value="protein"/>
</dbReference>
<dbReference type="Bgee" id="ENSG00000132530">
    <property type="expression patterns" value="Expressed in apex of heart and 183 other cell types or tissues"/>
</dbReference>
<dbReference type="ExpressionAtlas" id="Q6GPH4">
    <property type="expression patterns" value="baseline and differential"/>
</dbReference>
<dbReference type="GO" id="GO:0005737">
    <property type="term" value="C:cytoplasm"/>
    <property type="evidence" value="ECO:0000305"/>
    <property type="project" value="UniProt"/>
</dbReference>
<dbReference type="GO" id="GO:0005829">
    <property type="term" value="C:cytosol"/>
    <property type="evidence" value="ECO:0000304"/>
    <property type="project" value="Reactome"/>
</dbReference>
<dbReference type="GO" id="GO:0005739">
    <property type="term" value="C:mitochondrion"/>
    <property type="evidence" value="ECO:0000314"/>
    <property type="project" value="HPA"/>
</dbReference>
<dbReference type="GO" id="GO:0005654">
    <property type="term" value="C:nucleoplasm"/>
    <property type="evidence" value="ECO:0000314"/>
    <property type="project" value="HPA"/>
</dbReference>
<dbReference type="GO" id="GO:0140313">
    <property type="term" value="F:molecular sequestering activity"/>
    <property type="evidence" value="ECO:0000314"/>
    <property type="project" value="UniProt"/>
</dbReference>
<dbReference type="GO" id="GO:0008270">
    <property type="term" value="F:zinc ion binding"/>
    <property type="evidence" value="ECO:0007669"/>
    <property type="project" value="UniProtKB-KW"/>
</dbReference>
<dbReference type="GO" id="GO:0006915">
    <property type="term" value="P:apoptotic process"/>
    <property type="evidence" value="ECO:0007669"/>
    <property type="project" value="UniProtKB-KW"/>
</dbReference>
<dbReference type="GO" id="GO:0032480">
    <property type="term" value="P:negative regulation of type I interferon production"/>
    <property type="evidence" value="ECO:0000314"/>
    <property type="project" value="UniProt"/>
</dbReference>
<dbReference type="GO" id="GO:0035456">
    <property type="term" value="P:response to interferon-beta"/>
    <property type="evidence" value="ECO:0000314"/>
    <property type="project" value="BHF-UCL"/>
</dbReference>
<dbReference type="Gene3D" id="6.10.250.1730">
    <property type="match status" value="1"/>
</dbReference>
<dbReference type="Gene3D" id="3.30.40.10">
    <property type="entry name" value="Zinc/RING finger domain, C3HC4 (zinc finger)"/>
    <property type="match status" value="2"/>
</dbReference>
<dbReference type="InterPro" id="IPR051986">
    <property type="entry name" value="Innate_Immune_Apopt_Reg"/>
</dbReference>
<dbReference type="InterPro" id="IPR049439">
    <property type="entry name" value="TRAFD1-XIAF1_Znf"/>
</dbReference>
<dbReference type="InterPro" id="IPR041386">
    <property type="entry name" value="XAF1_C"/>
</dbReference>
<dbReference type="InterPro" id="IPR031220">
    <property type="entry name" value="XAF1_C_sf"/>
</dbReference>
<dbReference type="InterPro" id="IPR013083">
    <property type="entry name" value="Znf_RING/FYVE/PHD"/>
</dbReference>
<dbReference type="InterPro" id="IPR001293">
    <property type="entry name" value="Znf_TRAF"/>
</dbReference>
<dbReference type="PANTHER" id="PTHR16295">
    <property type="entry name" value="TRAF-TYPE ZINC FINGER PROTEIN-RELATED"/>
    <property type="match status" value="1"/>
</dbReference>
<dbReference type="PANTHER" id="PTHR16295:SF17">
    <property type="entry name" value="XIAP-ASSOCIATED FACTOR 1"/>
    <property type="match status" value="1"/>
</dbReference>
<dbReference type="Pfam" id="PF21366">
    <property type="entry name" value="TRAFD1-XIAF1_ZnF"/>
    <property type="match status" value="1"/>
</dbReference>
<dbReference type="Pfam" id="PF18608">
    <property type="entry name" value="XAF1_C"/>
    <property type="match status" value="1"/>
</dbReference>
<dbReference type="Pfam" id="PF23580">
    <property type="entry name" value="Znf_XAF1_N"/>
    <property type="match status" value="1"/>
</dbReference>
<dbReference type="PROSITE" id="PS50145">
    <property type="entry name" value="ZF_TRAF"/>
    <property type="match status" value="1"/>
</dbReference>
<sequence>MEGDFSVCRNCKRHVVSANFTLHEAYCLRFLVLCPECEEPVPKETMEEHCKLEHQQVGCTMCQQSMQKSSLEFHKANECQERPVECKFCKLDMQLSKLELHESYCGSRTELCQGCGQFIMHRMLAQHRDVCRSEQAQLGKGERISAPEREIYCHYCNQMIPENKYFHHMGKCCPDSEFKKHFPVGNPEILPSSLPSQAAENQTSTMEKDVRPKTRSINRFPLHSESSSKKAPRSKNKTLDPLLMSEPKPRTSSPRGDKAAYDILRRCSQCGILLPLPILNQHQEKCRWLASSKGKQVRNFS</sequence>
<organism>
    <name type="scientific">Homo sapiens</name>
    <name type="common">Human</name>
    <dbReference type="NCBI Taxonomy" id="9606"/>
    <lineage>
        <taxon>Eukaryota</taxon>
        <taxon>Metazoa</taxon>
        <taxon>Chordata</taxon>
        <taxon>Craniata</taxon>
        <taxon>Vertebrata</taxon>
        <taxon>Euteleostomi</taxon>
        <taxon>Mammalia</taxon>
        <taxon>Eutheria</taxon>
        <taxon>Euarchontoglires</taxon>
        <taxon>Primates</taxon>
        <taxon>Haplorrhini</taxon>
        <taxon>Catarrhini</taxon>
        <taxon>Hominidae</taxon>
        <taxon>Homo</taxon>
    </lineage>
</organism>
<comment type="function">
    <text evidence="3 4 6 7 9">Seems to function as a negative regulator of members of the IAP (inhibitor of apoptosis protein) family. Inhibits anti-caspase activity of BIRC4. Induces cleavage and inactivation of BIRC4 independent of caspase activation. Mediates TNF-alpha-induced apoptosis and is involved in apoptosis in trophoblast cells. May inhibit BIRC4 indirectly by activating the mitochondrial apoptosis pathway. After translocation to mitochondria, promotes translocation of BAX to mitochondria and cytochrome c release from mitochondria. Seems to promote the redistribution of BIRC4 from the cytoplasm to the nucleus, probably independent of BIRC4 inactivation which seems to occur in the cytoplasm. The BIRC4-XAF1 complex mediates down-regulation of BIRC5/survivin; the process requires the E3 ligase activity of BIRC4. Seems to be involved in cellular sensitivity to the proapoptotic actions of TRAIL. May be a tumor suppressor by mediating apoptosis resistance of cancer cells.</text>
</comment>
<comment type="subunit">
    <text evidence="3 6 9 10">Interacts with BIRC4; the interaction is not detected in (PubMed:16432762). Interacts with BIRC1, BIRC2, BIRC3, BIRC7 and BIRC8. Part of an complex consisting of BIRC4, XAF1 and BIRC5; the complex formation requires IFN-beta stimulation. Interacts with RNF114, the interaction increases XAF1 stability and proapoptotic effects, and may regulate IFN signaling.</text>
</comment>
<comment type="interaction">
    <interactant intactId="EBI-2815120">
        <id>Q6GPH4</id>
    </interactant>
    <interactant intactId="EBI-296087">
        <id>P31749</id>
        <label>AKT1</label>
    </interactant>
    <organismsDiffer>false</organismsDiffer>
    <experiments>4</experiments>
</comment>
<comment type="interaction">
    <interactant intactId="EBI-2815120">
        <id>Q6GPH4</id>
    </interactant>
    <interactant intactId="EBI-517623">
        <id>Q96CA5</id>
        <label>BIRC7</label>
    </interactant>
    <organismsDiffer>false</organismsDiffer>
    <experiments>3</experiments>
</comment>
<comment type="interaction">
    <interactant intactId="EBI-2815120">
        <id>Q6GPH4</id>
    </interactant>
    <interactant intactId="EBI-3938654">
        <id>Q9UI32</id>
        <label>GLS2</label>
    </interactant>
    <organismsDiffer>false</organismsDiffer>
    <experiments>3</experiments>
</comment>
<comment type="interaction">
    <interactant intactId="EBI-2815120">
        <id>Q6GPH4</id>
    </interactant>
    <interactant intactId="EBI-720984">
        <id>Q6UWE0</id>
        <label>LRSAM1</label>
    </interactant>
    <organismsDiffer>false</organismsDiffer>
    <experiments>3</experiments>
</comment>
<comment type="interaction">
    <interactant intactId="EBI-2815120">
        <id>Q6GPH4</id>
    </interactant>
    <interactant intactId="EBI-712376">
        <id>P40937</id>
        <label>RFC5</label>
    </interactant>
    <organismsDiffer>false</organismsDiffer>
    <experiments>3</experiments>
</comment>
<comment type="interaction">
    <interactant intactId="EBI-2815120">
        <id>Q6GPH4</id>
    </interactant>
    <interactant intactId="EBI-723587">
        <id>Q9Y508</id>
        <label>RNF114</label>
    </interactant>
    <organismsDiffer>false</organismsDiffer>
    <experiments>8</experiments>
</comment>
<comment type="interaction">
    <interactant intactId="EBI-2815120">
        <id>Q6GPH4</id>
    </interactant>
    <interactant intactId="EBI-2130320">
        <id>Q96A37</id>
        <label>RNF166</label>
    </interactant>
    <organismsDiffer>false</organismsDiffer>
    <experiments>4</experiments>
</comment>
<comment type="interaction">
    <interactant intactId="EBI-2815120">
        <id>Q6GPH4</id>
    </interactant>
    <interactant intactId="EBI-714091">
        <id>P49903</id>
        <label>SEPHS1</label>
    </interactant>
    <organismsDiffer>false</organismsDiffer>
    <experiments>3</experiments>
</comment>
<comment type="interaction">
    <interactant intactId="EBI-2815120">
        <id>Q6GPH4</id>
    </interactant>
    <interactant intactId="EBI-81290">
        <id>P19474</id>
        <label>TRIM21</label>
    </interactant>
    <organismsDiffer>false</organismsDiffer>
    <experiments>3</experiments>
</comment>
<comment type="interaction">
    <interactant intactId="EBI-2815120">
        <id>Q6GPH4</id>
    </interactant>
    <interactant intactId="EBI-9867283">
        <id>Q86XT4</id>
        <label>TRIM50</label>
    </interactant>
    <organismsDiffer>false</organismsDiffer>
    <experiments>3</experiments>
</comment>
<comment type="interaction">
    <interactant intactId="EBI-2815120">
        <id>Q6GPH4</id>
    </interactant>
    <interactant intactId="EBI-2130429">
        <id>Q9BYV2</id>
        <label>TRIM54</label>
    </interactant>
    <organismsDiffer>false</organismsDiffer>
    <experiments>6</experiments>
</comment>
<comment type="interaction">
    <interactant intactId="EBI-2815120">
        <id>Q6GPH4</id>
    </interactant>
    <interactant intactId="EBI-11059915">
        <id>Q8N7C3</id>
        <label>TRIML2</label>
    </interactant>
    <organismsDiffer>false</organismsDiffer>
    <experiments>3</experiments>
</comment>
<comment type="interaction">
    <interactant intactId="EBI-2815120">
        <id>Q6GPH4</id>
    </interactant>
    <interactant intactId="EBI-1993619">
        <id>Q14CS0</id>
        <label>UBXN2B</label>
    </interactant>
    <organismsDiffer>false</organismsDiffer>
    <experiments>3</experiments>
</comment>
<comment type="interaction">
    <interactant intactId="EBI-2815120">
        <id>Q6GPH4</id>
    </interactant>
    <interactant intactId="EBI-355164">
        <id>P55072</id>
        <label>VCP</label>
    </interactant>
    <organismsDiffer>false</organismsDiffer>
    <experiments>3</experiments>
</comment>
<comment type="subcellular location">
    <subcellularLocation>
        <location>Cytoplasm</location>
    </subcellularLocation>
    <subcellularLocation>
        <location>Nucleus</location>
    </subcellularLocation>
    <subcellularLocation>
        <location>Mitochondrion</location>
    </subcellularLocation>
    <text>Found in the cytoplasm and nucleus of placental syncytiotrophoblasts. Translocates to mitochondria upon TNF-alpha treatment.</text>
</comment>
<comment type="subcellular location">
    <molecule>Isoform 1</molecule>
    <subcellularLocation>
        <location>Nucleus</location>
    </subcellularLocation>
</comment>
<comment type="subcellular location">
    <molecule>Isoform 5</molecule>
    <subcellularLocation>
        <location>Nucleus</location>
    </subcellularLocation>
</comment>
<comment type="alternative products">
    <event type="alternative splicing"/>
    <isoform>
        <id>Q6GPH4-1</id>
        <name>1</name>
        <name>XAF1(A)</name>
        <sequence type="displayed"/>
    </isoform>
    <isoform>
        <id>Q6GPH4-2</id>
        <name>2</name>
        <name>XAF1B</name>
        <sequence type="described" ref="VSP_032919"/>
    </isoform>
    <isoform>
        <id>Q6GPH4-3</id>
        <name>3</name>
        <name>D</name>
        <sequence type="described" ref="VSP_032923"/>
    </isoform>
    <isoform>
        <id>Q6GPH4-4</id>
        <name>4</name>
        <name>E</name>
        <sequence type="described" ref="VSP_032919 VSP_032923"/>
    </isoform>
    <isoform>
        <id>Q6GPH4-5</id>
        <name>5</name>
        <name>XAF1C</name>
        <sequence type="described" ref="VSP_032922"/>
    </isoform>
    <isoform>
        <id>Q6GPH4-6</id>
        <name>6</name>
        <sequence type="described" ref="VSP_032918 VSP_032921"/>
    </isoform>
    <isoform>
        <id>Q6GPH4-7</id>
        <name>7</name>
        <sequence type="described" ref="VSP_032920"/>
    </isoform>
</comment>
<comment type="tissue specificity">
    <text evidence="3 5 7 8">Widely expressed. Expression is frequently down-regulated in cancer cell lines. Isoform 5 is widely expressed. Expressed in placenta (at protein level).</text>
</comment>
<comment type="developmental stage">
    <text evidence="7">Selectively expressed in third trimester placenta.</text>
</comment>
<comment type="induction">
    <text evidence="4 7">Up-regulated by IFNB1/IFN-beta in cell lines sensitive to the proapoptotic effects of IFNB1 but not in apoptosis-resistant cells. Up-regulated by TNF in trophoblast cells.</text>
</comment>
<comment type="sequence caution" evidence="14">
    <conflict type="erroneous initiation">
        <sequence resource="EMBL-CDS" id="AAH32776"/>
    </conflict>
</comment>
<comment type="sequence caution" evidence="14">
    <conflict type="frameshift">
        <sequence resource="EMBL-CDS" id="CAA68030"/>
    </conflict>
</comment>
<comment type="online information" name="Atlas of Genetics and Cytogenetics in Oncology and Haematology">
    <link uri="https://atlasgeneticsoncology.org/gene/44095/XAF1"/>
</comment>
<gene>
    <name type="primary">XAF1</name>
    <name type="synonym">BIRC4BP</name>
    <name type="synonym">XIAPAF1</name>
</gene>
<proteinExistence type="evidence at protein level"/>
<feature type="chain" id="PRO_0000329028" description="XIAP-associated factor 1">
    <location>
        <begin position="1"/>
        <end position="301"/>
    </location>
</feature>
<feature type="zinc finger region" description="TRAF-type" evidence="1">
    <location>
        <begin position="22"/>
        <end position="99"/>
    </location>
</feature>
<feature type="region of interest" description="Disordered" evidence="2">
    <location>
        <begin position="189"/>
        <end position="257"/>
    </location>
</feature>
<feature type="compositionally biased region" description="Polar residues" evidence="2">
    <location>
        <begin position="193"/>
        <end position="205"/>
    </location>
</feature>
<feature type="splice variant" id="VSP_032918" description="In isoform 6." evidence="11">
    <location>
        <begin position="1"/>
        <end position="102"/>
    </location>
</feature>
<feature type="splice variant" id="VSP_032919" description="In isoform 2 and isoform 4." evidence="11 13">
    <location>
        <begin position="57"/>
        <end position="75"/>
    </location>
</feature>
<feature type="splice variant" id="VSP_032920" description="In isoform 7." evidence="12">
    <original>VGCTMCQQSMQKSSLEFH</original>
    <variation>GKEFQLLKGKSTVIIATK</variation>
    <location>
        <begin position="57"/>
        <end position="74"/>
    </location>
</feature>
<feature type="splice variant" id="VSP_032921" description="In isoform 6." evidence="11">
    <original>SYCGSRTELCQGCGQFIMHRMLAQHRDVCRSEQAQLGK</original>
    <variation>MSLHYGCCCPECTSVAIKEMMWVIRPRVACVVKDAGSA</variation>
    <location>
        <begin position="103"/>
        <end position="140"/>
    </location>
</feature>
<feature type="splice variant" id="VSP_032922" description="In isoform 5." evidence="14">
    <original>GERISAPEREIYCHYCNQMIPENKYFHHMGKCCPDSEFKKHFPVGNPEILPSSLPSQAAENQTSTMEKDVRPKTRSINRFPLHSESSSKKAPRSKNKTLDPLLMSEPKPRTSSPRGDKAAYDILRRCSQCGILLPLPILNQHQEKCRWLASSKGKQVRNFS</original>
    <variation>ETSPDPGKCLSITVAAALSAHLWPFT</variation>
    <location>
        <begin position="141"/>
        <end position="301"/>
    </location>
</feature>
<feature type="splice variant" id="VSP_032923" description="In isoform 3 and isoform 4." evidence="13">
    <location>
        <begin position="142"/>
        <end position="301"/>
    </location>
</feature>
<feature type="sequence variant" id="VAR_042616" description="In dbSNP:rs34195599.">
    <original>E</original>
    <variation>G</variation>
    <location>
        <position position="85"/>
    </location>
</feature>
<feature type="sequence variant" id="VAR_042617" description="In dbSNP:rs2271232.">
    <original>R</original>
    <variation>H</variation>
    <location>
        <position position="132"/>
    </location>
</feature>
<feature type="sequence variant" id="VAR_042618" description="In dbSNP:rs34625877.">
    <original>E</original>
    <variation>K</variation>
    <location>
        <position position="188"/>
    </location>
</feature>
<feature type="sequence variant" id="VAR_042619" description="In dbSNP:rs3736433.">
    <original>R</original>
    <variation>I</variation>
    <location>
        <position position="219"/>
    </location>
</feature>
<feature type="sequence conflict" description="In Ref. 3; BAF85537." evidence="14" ref="3">
    <original>R</original>
    <variation>Q</variation>
    <location>
        <position position="132"/>
    </location>
</feature>
<feature type="sequence conflict" description="In Ref. 3; BAF85537." evidence="14" ref="3">
    <original>L</original>
    <variation>R</variation>
    <location>
        <position position="138"/>
    </location>
</feature>
<feature type="sequence conflict" description="In Ref. 3; BAF85537." evidence="14" ref="3">
    <original>S</original>
    <variation>R</variation>
    <location>
        <position position="196"/>
    </location>
</feature>
<feature type="turn" evidence="15">
    <location>
        <begin position="261"/>
        <end position="263"/>
    </location>
</feature>
<feature type="strand" evidence="15">
    <location>
        <begin position="264"/>
        <end position="266"/>
    </location>
</feature>
<feature type="turn" evidence="15">
    <location>
        <begin position="268"/>
        <end position="270"/>
    </location>
</feature>
<feature type="helix" evidence="15">
    <location>
        <begin position="279"/>
        <end position="292"/>
    </location>
</feature>
<keyword id="KW-0002">3D-structure</keyword>
<keyword id="KW-0025">Alternative splicing</keyword>
<keyword id="KW-0053">Apoptosis</keyword>
<keyword id="KW-0963">Cytoplasm</keyword>
<keyword id="KW-0479">Metal-binding</keyword>
<keyword id="KW-0496">Mitochondrion</keyword>
<keyword id="KW-0539">Nucleus</keyword>
<keyword id="KW-1267">Proteomics identification</keyword>
<keyword id="KW-1185">Reference proteome</keyword>
<keyword id="KW-0043">Tumor suppressor</keyword>
<keyword id="KW-0862">Zinc</keyword>
<keyword id="KW-0863">Zinc-finger</keyword>
<name>XAF1_HUMAN</name>
<reference key="1">
    <citation type="journal article" date="2001" name="Nat. Cell Biol.">
        <title>Identification of XAF1 as an antagonist of XIAP anti-Caspase activity.</title>
        <authorList>
            <person name="Liston P."/>
            <person name="Fong W.G."/>
            <person name="Kelly N.L."/>
            <person name="Toji S."/>
            <person name="Miyazaki T."/>
            <person name="Conte D."/>
            <person name="Tamai K."/>
            <person name="Craig C.G."/>
            <person name="McBurney M.W."/>
            <person name="Korneluk R.G."/>
        </authorList>
    </citation>
    <scope>NUCLEOTIDE SEQUENCE [MRNA] (ISOFORM 1)</scope>
    <scope>FUNCTION</scope>
    <scope>INTERACTION WITH BIRC4</scope>
    <scope>SUBCELLULAR LOCATION</scope>
    <scope>TISSUE SPECIFICITY</scope>
    <source>
        <tissue>Placenta</tissue>
    </source>
</reference>
<reference key="2">
    <citation type="journal article" date="2007" name="Gastroenterology">
        <title>Frequent alteration of XAF1 in human colorectal cancers: implication for tumor cell resistance to apoptotic stresses.</title>
        <authorList>
            <person name="Chung S.K."/>
            <person name="Lee M.G."/>
            <person name="Ryu B.K."/>
            <person name="Lee J.H."/>
            <person name="Han J."/>
            <person name="Byun D.S."/>
            <person name="Chae K.S."/>
            <person name="Lee K.Y."/>
            <person name="Jang J.Y."/>
            <person name="Kim H.J."/>
            <person name="Chi S.G."/>
        </authorList>
    </citation>
    <scope>NUCLEOTIDE SEQUENCE [MRNA] (ISOFORMS 3 AND 4)</scope>
    <scope>TISSUE SPECIFICITY</scope>
</reference>
<reference key="3">
    <citation type="journal article" date="2004" name="Nat. Genet.">
        <title>Complete sequencing and characterization of 21,243 full-length human cDNAs.</title>
        <authorList>
            <person name="Ota T."/>
            <person name="Suzuki Y."/>
            <person name="Nishikawa T."/>
            <person name="Otsuki T."/>
            <person name="Sugiyama T."/>
            <person name="Irie R."/>
            <person name="Wakamatsu A."/>
            <person name="Hayashi K."/>
            <person name="Sato H."/>
            <person name="Nagai K."/>
            <person name="Kimura K."/>
            <person name="Makita H."/>
            <person name="Sekine M."/>
            <person name="Obayashi M."/>
            <person name="Nishi T."/>
            <person name="Shibahara T."/>
            <person name="Tanaka T."/>
            <person name="Ishii S."/>
            <person name="Yamamoto J."/>
            <person name="Saito K."/>
            <person name="Kawai Y."/>
            <person name="Isono Y."/>
            <person name="Nakamura Y."/>
            <person name="Nagahari K."/>
            <person name="Murakami K."/>
            <person name="Yasuda T."/>
            <person name="Iwayanagi T."/>
            <person name="Wagatsuma M."/>
            <person name="Shiratori A."/>
            <person name="Sudo H."/>
            <person name="Hosoiri T."/>
            <person name="Kaku Y."/>
            <person name="Kodaira H."/>
            <person name="Kondo H."/>
            <person name="Sugawara M."/>
            <person name="Takahashi M."/>
            <person name="Kanda K."/>
            <person name="Yokoi T."/>
            <person name="Furuya T."/>
            <person name="Kikkawa E."/>
            <person name="Omura Y."/>
            <person name="Abe K."/>
            <person name="Kamihara K."/>
            <person name="Katsuta N."/>
            <person name="Sato K."/>
            <person name="Tanikawa M."/>
            <person name="Yamazaki M."/>
            <person name="Ninomiya K."/>
            <person name="Ishibashi T."/>
            <person name="Yamashita H."/>
            <person name="Murakawa K."/>
            <person name="Fujimori K."/>
            <person name="Tanai H."/>
            <person name="Kimata M."/>
            <person name="Watanabe M."/>
            <person name="Hiraoka S."/>
            <person name="Chiba Y."/>
            <person name="Ishida S."/>
            <person name="Ono Y."/>
            <person name="Takiguchi S."/>
            <person name="Watanabe S."/>
            <person name="Yosida M."/>
            <person name="Hotuta T."/>
            <person name="Kusano J."/>
            <person name="Kanehori K."/>
            <person name="Takahashi-Fujii A."/>
            <person name="Hara H."/>
            <person name="Tanase T.-O."/>
            <person name="Nomura Y."/>
            <person name="Togiya S."/>
            <person name="Komai F."/>
            <person name="Hara R."/>
            <person name="Takeuchi K."/>
            <person name="Arita M."/>
            <person name="Imose N."/>
            <person name="Musashino K."/>
            <person name="Yuuki H."/>
            <person name="Oshima A."/>
            <person name="Sasaki N."/>
            <person name="Aotsuka S."/>
            <person name="Yoshikawa Y."/>
            <person name="Matsunawa H."/>
            <person name="Ichihara T."/>
            <person name="Shiohata N."/>
            <person name="Sano S."/>
            <person name="Moriya S."/>
            <person name="Momiyama H."/>
            <person name="Satoh N."/>
            <person name="Takami S."/>
            <person name="Terashima Y."/>
            <person name="Suzuki O."/>
            <person name="Nakagawa S."/>
            <person name="Senoh A."/>
            <person name="Mizoguchi H."/>
            <person name="Goto Y."/>
            <person name="Shimizu F."/>
            <person name="Wakebe H."/>
            <person name="Hishigaki H."/>
            <person name="Watanabe T."/>
            <person name="Sugiyama A."/>
            <person name="Takemoto M."/>
            <person name="Kawakami B."/>
            <person name="Yamazaki M."/>
            <person name="Watanabe K."/>
            <person name="Kumagai A."/>
            <person name="Itakura S."/>
            <person name="Fukuzumi Y."/>
            <person name="Fujimori Y."/>
            <person name="Komiyama M."/>
            <person name="Tashiro H."/>
            <person name="Tanigami A."/>
            <person name="Fujiwara T."/>
            <person name="Ono T."/>
            <person name="Yamada K."/>
            <person name="Fujii Y."/>
            <person name="Ozaki K."/>
            <person name="Hirao M."/>
            <person name="Ohmori Y."/>
            <person name="Kawabata A."/>
            <person name="Hikiji T."/>
            <person name="Kobatake N."/>
            <person name="Inagaki H."/>
            <person name="Ikema Y."/>
            <person name="Okamoto S."/>
            <person name="Okitani R."/>
            <person name="Kawakami T."/>
            <person name="Noguchi S."/>
            <person name="Itoh T."/>
            <person name="Shigeta K."/>
            <person name="Senba T."/>
            <person name="Matsumura K."/>
            <person name="Nakajima Y."/>
            <person name="Mizuno T."/>
            <person name="Morinaga M."/>
            <person name="Sasaki M."/>
            <person name="Togashi T."/>
            <person name="Oyama M."/>
            <person name="Hata H."/>
            <person name="Watanabe M."/>
            <person name="Komatsu T."/>
            <person name="Mizushima-Sugano J."/>
            <person name="Satoh T."/>
            <person name="Shirai Y."/>
            <person name="Takahashi Y."/>
            <person name="Nakagawa K."/>
            <person name="Okumura K."/>
            <person name="Nagase T."/>
            <person name="Nomura N."/>
            <person name="Kikuchi H."/>
            <person name="Masuho Y."/>
            <person name="Yamashita R."/>
            <person name="Nakai K."/>
            <person name="Yada T."/>
            <person name="Nakamura Y."/>
            <person name="Ohara O."/>
            <person name="Isogai T."/>
            <person name="Sugano S."/>
        </authorList>
    </citation>
    <scope>NUCLEOTIDE SEQUENCE [LARGE SCALE MRNA] (ISOFORMS 1; 2 AND 6)</scope>
    <source>
        <tissue>Thymus</tissue>
    </source>
</reference>
<reference key="4">
    <citation type="submission" date="2005-09" db="EMBL/GenBank/DDBJ databases">
        <authorList>
            <person name="Mural R.J."/>
            <person name="Istrail S."/>
            <person name="Sutton G.G."/>
            <person name="Florea L."/>
            <person name="Halpern A.L."/>
            <person name="Mobarry C.M."/>
            <person name="Lippert R."/>
            <person name="Walenz B."/>
            <person name="Shatkay H."/>
            <person name="Dew I."/>
            <person name="Miller J.R."/>
            <person name="Flanigan M.J."/>
            <person name="Edwards N.J."/>
            <person name="Bolanos R."/>
            <person name="Fasulo D."/>
            <person name="Halldorsson B.V."/>
            <person name="Hannenhalli S."/>
            <person name="Turner R."/>
            <person name="Yooseph S."/>
            <person name="Lu F."/>
            <person name="Nusskern D.R."/>
            <person name="Shue B.C."/>
            <person name="Zheng X.H."/>
            <person name="Zhong F."/>
            <person name="Delcher A.L."/>
            <person name="Huson D.H."/>
            <person name="Kravitz S.A."/>
            <person name="Mouchard L."/>
            <person name="Reinert K."/>
            <person name="Remington K.A."/>
            <person name="Clark A.G."/>
            <person name="Waterman M.S."/>
            <person name="Eichler E.E."/>
            <person name="Adams M.D."/>
            <person name="Hunkapiller M.W."/>
            <person name="Myers E.W."/>
            <person name="Venter J.C."/>
        </authorList>
    </citation>
    <scope>NUCLEOTIDE SEQUENCE [LARGE SCALE GENOMIC DNA]</scope>
</reference>
<reference key="5">
    <citation type="journal article" date="2004" name="Genome Res.">
        <title>The status, quality, and expansion of the NIH full-length cDNA project: the Mammalian Gene Collection (MGC).</title>
        <authorList>
            <consortium name="The MGC Project Team"/>
        </authorList>
    </citation>
    <scope>NUCLEOTIDE SEQUENCE [LARGE SCALE MRNA] (ISOFORMS 1 AND 7)</scope>
    <source>
        <tissue>Testis</tissue>
    </source>
</reference>
<reference key="6">
    <citation type="journal article" date="2007" name="BMC Genomics">
        <title>The full-ORF clone resource of the German cDNA consortium.</title>
        <authorList>
            <person name="Bechtel S."/>
            <person name="Rosenfelder H."/>
            <person name="Duda A."/>
            <person name="Schmidt C.P."/>
            <person name="Ernst U."/>
            <person name="Wellenreuther R."/>
            <person name="Mehrle A."/>
            <person name="Schuster C."/>
            <person name="Bahr A."/>
            <person name="Bloecker H."/>
            <person name="Heubner D."/>
            <person name="Hoerlein A."/>
            <person name="Michel G."/>
            <person name="Wedler H."/>
            <person name="Koehrer K."/>
            <person name="Ottenwaelder B."/>
            <person name="Poustka A."/>
            <person name="Wiemann S."/>
            <person name="Schupp I."/>
        </authorList>
    </citation>
    <scope>NUCLEOTIDE SEQUENCE [LARGE SCALE MRNA] OF 1-57</scope>
    <source>
        <tissue>Endometrium</tissue>
    </source>
</reference>
<reference key="7">
    <citation type="journal article" date="2002" name="J. Biol. Chem.">
        <title>Identification of X-linked inhibitor of apoptosis-associated factor-1 as an interferon-stimulated gene that augments TRAIL Apo2L-induced apoptosis.</title>
        <authorList>
            <person name="Leaman D.W."/>
            <person name="Chawla-Sarkar M."/>
            <person name="Vyas K."/>
            <person name="Reheman M."/>
            <person name="Tamai K."/>
            <person name="Toji S."/>
            <person name="Borden E.C."/>
        </authorList>
    </citation>
    <scope>FUNCTION</scope>
    <scope>INDUCTION</scope>
</reference>
<reference key="8">
    <citation type="journal article" date="2006" name="Biochem. Biophys. Res. Commun.">
        <title>Identification of a novel splice variant of X-linked inhibitor of apoptosis-associated factor 1.</title>
        <authorList>
            <person name="Yin W."/>
            <person name="Cheepala S."/>
            <person name="Clifford J.L."/>
        </authorList>
    </citation>
    <scope>ALTERNATIVE SPLICING (ISOFORM 5)</scope>
    <scope>SUBCELLULAR LOCATION</scope>
    <scope>TISSUE SPECIFICITY</scope>
</reference>
<reference key="9">
    <citation type="journal article" date="2006" name="Mol. Cell. Biochem.">
        <title>Xaf1 can cooperate with TNFalpha in the induction of apoptosis, independently of interaction with XIAP.</title>
        <authorList>
            <person name="Xia Y."/>
            <person name="Novak R."/>
            <person name="Lewis J."/>
            <person name="Duckett C.S."/>
            <person name="Phillips A.C."/>
        </authorList>
    </citation>
    <scope>FUNCTION IN TNF-ALPHA-INDUCED APOPTOSIS</scope>
    <scope>NEGATIVE INTERACTION WITH BIRC4</scope>
</reference>
<reference key="10">
    <citation type="journal article" date="2007" name="J. Biol. Chem.">
        <title>Degradation of survivin by the X-linked inhibitor of apoptosis (XIAP)-XAF1 complex.</title>
        <authorList>
            <person name="Arora V."/>
            <person name="Cheung H.H."/>
            <person name="Plenchette S."/>
            <person name="Micali O.C."/>
            <person name="Liston P."/>
            <person name="Korneluk R.G."/>
        </authorList>
    </citation>
    <scope>FUNCTION IN BIRC5 DEGRADATION</scope>
    <scope>INTERACTION WITH BIRC1; BIRC2; BIRC3; BIRC4; BIRC7 AND BIRC8</scope>
</reference>
<reference key="11">
    <citation type="journal article" date="2007" name="J. Biol. Chem.">
        <title>XAF1 mediates tumor necrosis factor-alpha-induced apoptosis and X-linked inhibitor of apoptosis cleavage by acting through the mitochondrial pathway.</title>
        <authorList>
            <person name="Straszewski-Chavez S.L."/>
            <person name="Visintin I.P."/>
            <person name="Karassina N."/>
            <person name="Los G."/>
            <person name="Liston P."/>
            <person name="Halaban R."/>
            <person name="Fadiel A."/>
            <person name="Mor G."/>
        </authorList>
    </citation>
    <scope>FUNCTION IN TNF-ALPHA-INDUCED APOPTOSIS</scope>
    <scope>SUBCELLULAR LOCATION</scope>
    <scope>TISSUE SPECIFICITY</scope>
    <scope>DEVELOPMENTAL STAGE</scope>
    <scope>INDUCTION</scope>
</reference>
<reference key="12">
    <citation type="journal article" date="2013" name="Cell Death Differ.">
        <title>ZNF313 is a novel cell cycle activator with an E3 ligase activity inhibiting cellular senescence by destabilizing p21(WAF1.).</title>
        <authorList>
            <person name="Han J."/>
            <person name="Kim Y.L."/>
            <person name="Lee K.W."/>
            <person name="Her N.G."/>
            <person name="Ha T.K."/>
            <person name="Yoon S."/>
            <person name="Jeong S.I."/>
            <person name="Lee J.H."/>
            <person name="Kang M.J."/>
            <person name="Lee M.G."/>
            <person name="Ryu B.K."/>
            <person name="Baik J.H."/>
            <person name="Chi S.G."/>
        </authorList>
    </citation>
    <scope>INTERACTION WITH RNF114</scope>
</reference>
<accession>Q6GPH4</accession>
<accession>A2T931</accession>
<accession>A2T932</accession>
<accession>A8K2L1</accession>
<accession>A8K9Y3</accession>
<accession>D3DTM6</accession>
<accession>Q6MZE8</accession>
<accession>Q8N557</accession>
<accession>Q99982</accession>
<evidence type="ECO:0000255" key="1">
    <source>
        <dbReference type="PROSITE-ProRule" id="PRU00207"/>
    </source>
</evidence>
<evidence type="ECO:0000256" key="2">
    <source>
        <dbReference type="SAM" id="MobiDB-lite"/>
    </source>
</evidence>
<evidence type="ECO:0000269" key="3">
    <source>
    </source>
</evidence>
<evidence type="ECO:0000269" key="4">
    <source>
    </source>
</evidence>
<evidence type="ECO:0000269" key="5">
    <source>
    </source>
</evidence>
<evidence type="ECO:0000269" key="6">
    <source>
    </source>
</evidence>
<evidence type="ECO:0000269" key="7">
    <source>
    </source>
</evidence>
<evidence type="ECO:0000269" key="8">
    <source>
    </source>
</evidence>
<evidence type="ECO:0000269" key="9">
    <source>
    </source>
</evidence>
<evidence type="ECO:0000269" key="10">
    <source>
    </source>
</evidence>
<evidence type="ECO:0000303" key="11">
    <source>
    </source>
</evidence>
<evidence type="ECO:0000303" key="12">
    <source>
    </source>
</evidence>
<evidence type="ECO:0000303" key="13">
    <source>
    </source>
</evidence>
<evidence type="ECO:0000305" key="14"/>
<evidence type="ECO:0007829" key="15">
    <source>
        <dbReference type="PDB" id="2LXW"/>
    </source>
</evidence>